<name>RL2_ECOSE</name>
<keyword id="KW-0007">Acetylation</keyword>
<keyword id="KW-0687">Ribonucleoprotein</keyword>
<keyword id="KW-0689">Ribosomal protein</keyword>
<keyword id="KW-0694">RNA-binding</keyword>
<keyword id="KW-0699">rRNA-binding</keyword>
<protein>
    <recommendedName>
        <fullName evidence="1">Large ribosomal subunit protein uL2</fullName>
    </recommendedName>
    <alternativeName>
        <fullName evidence="3">50S ribosomal protein L2</fullName>
    </alternativeName>
</protein>
<dbReference type="EMBL" id="AP009240">
    <property type="protein sequence ID" value="BAG79116.1"/>
    <property type="molecule type" value="Genomic_DNA"/>
</dbReference>
<dbReference type="RefSeq" id="WP_000301864.1">
    <property type="nucleotide sequence ID" value="NC_011415.1"/>
</dbReference>
<dbReference type="SMR" id="B6I231"/>
<dbReference type="GeneID" id="93778670"/>
<dbReference type="KEGG" id="ecy:ECSE_3592"/>
<dbReference type="HOGENOM" id="CLU_036235_2_1_6"/>
<dbReference type="Proteomes" id="UP000008199">
    <property type="component" value="Chromosome"/>
</dbReference>
<dbReference type="GO" id="GO:0005829">
    <property type="term" value="C:cytosol"/>
    <property type="evidence" value="ECO:0007669"/>
    <property type="project" value="UniProtKB-ARBA"/>
</dbReference>
<dbReference type="GO" id="GO:0015934">
    <property type="term" value="C:large ribosomal subunit"/>
    <property type="evidence" value="ECO:0007669"/>
    <property type="project" value="InterPro"/>
</dbReference>
<dbReference type="GO" id="GO:0019843">
    <property type="term" value="F:rRNA binding"/>
    <property type="evidence" value="ECO:0007669"/>
    <property type="project" value="UniProtKB-UniRule"/>
</dbReference>
<dbReference type="GO" id="GO:0003735">
    <property type="term" value="F:structural constituent of ribosome"/>
    <property type="evidence" value="ECO:0007669"/>
    <property type="project" value="InterPro"/>
</dbReference>
<dbReference type="GO" id="GO:0016740">
    <property type="term" value="F:transferase activity"/>
    <property type="evidence" value="ECO:0007669"/>
    <property type="project" value="InterPro"/>
</dbReference>
<dbReference type="GO" id="GO:0002181">
    <property type="term" value="P:cytoplasmic translation"/>
    <property type="evidence" value="ECO:0007669"/>
    <property type="project" value="TreeGrafter"/>
</dbReference>
<dbReference type="FunFam" id="2.30.30.30:FF:000001">
    <property type="entry name" value="50S ribosomal protein L2"/>
    <property type="match status" value="1"/>
</dbReference>
<dbReference type="FunFam" id="2.40.50.140:FF:000003">
    <property type="entry name" value="50S ribosomal protein L2"/>
    <property type="match status" value="1"/>
</dbReference>
<dbReference type="FunFam" id="4.10.950.10:FF:000001">
    <property type="entry name" value="50S ribosomal protein L2"/>
    <property type="match status" value="1"/>
</dbReference>
<dbReference type="Gene3D" id="2.30.30.30">
    <property type="match status" value="1"/>
</dbReference>
<dbReference type="Gene3D" id="2.40.50.140">
    <property type="entry name" value="Nucleic acid-binding proteins"/>
    <property type="match status" value="1"/>
</dbReference>
<dbReference type="Gene3D" id="4.10.950.10">
    <property type="entry name" value="Ribosomal protein L2, domain 3"/>
    <property type="match status" value="1"/>
</dbReference>
<dbReference type="HAMAP" id="MF_01320_B">
    <property type="entry name" value="Ribosomal_uL2_B"/>
    <property type="match status" value="1"/>
</dbReference>
<dbReference type="InterPro" id="IPR012340">
    <property type="entry name" value="NA-bd_OB-fold"/>
</dbReference>
<dbReference type="InterPro" id="IPR014722">
    <property type="entry name" value="Rib_uL2_dom2"/>
</dbReference>
<dbReference type="InterPro" id="IPR002171">
    <property type="entry name" value="Ribosomal_uL2"/>
</dbReference>
<dbReference type="InterPro" id="IPR005880">
    <property type="entry name" value="Ribosomal_uL2_bac/org-type"/>
</dbReference>
<dbReference type="InterPro" id="IPR022669">
    <property type="entry name" value="Ribosomal_uL2_C"/>
</dbReference>
<dbReference type="InterPro" id="IPR022671">
    <property type="entry name" value="Ribosomal_uL2_CS"/>
</dbReference>
<dbReference type="InterPro" id="IPR014726">
    <property type="entry name" value="Ribosomal_uL2_dom3"/>
</dbReference>
<dbReference type="InterPro" id="IPR022666">
    <property type="entry name" value="Ribosomal_uL2_RNA-bd_dom"/>
</dbReference>
<dbReference type="InterPro" id="IPR008991">
    <property type="entry name" value="Translation_prot_SH3-like_sf"/>
</dbReference>
<dbReference type="NCBIfam" id="TIGR01171">
    <property type="entry name" value="rplB_bact"/>
    <property type="match status" value="1"/>
</dbReference>
<dbReference type="PANTHER" id="PTHR13691:SF5">
    <property type="entry name" value="LARGE RIBOSOMAL SUBUNIT PROTEIN UL2M"/>
    <property type="match status" value="1"/>
</dbReference>
<dbReference type="PANTHER" id="PTHR13691">
    <property type="entry name" value="RIBOSOMAL PROTEIN L2"/>
    <property type="match status" value="1"/>
</dbReference>
<dbReference type="Pfam" id="PF00181">
    <property type="entry name" value="Ribosomal_L2"/>
    <property type="match status" value="1"/>
</dbReference>
<dbReference type="Pfam" id="PF03947">
    <property type="entry name" value="Ribosomal_L2_C"/>
    <property type="match status" value="1"/>
</dbReference>
<dbReference type="PIRSF" id="PIRSF002158">
    <property type="entry name" value="Ribosomal_L2"/>
    <property type="match status" value="1"/>
</dbReference>
<dbReference type="SMART" id="SM01383">
    <property type="entry name" value="Ribosomal_L2"/>
    <property type="match status" value="1"/>
</dbReference>
<dbReference type="SMART" id="SM01382">
    <property type="entry name" value="Ribosomal_L2_C"/>
    <property type="match status" value="1"/>
</dbReference>
<dbReference type="SUPFAM" id="SSF50249">
    <property type="entry name" value="Nucleic acid-binding proteins"/>
    <property type="match status" value="1"/>
</dbReference>
<dbReference type="SUPFAM" id="SSF50104">
    <property type="entry name" value="Translation proteins SH3-like domain"/>
    <property type="match status" value="1"/>
</dbReference>
<dbReference type="PROSITE" id="PS00467">
    <property type="entry name" value="RIBOSOMAL_L2"/>
    <property type="match status" value="1"/>
</dbReference>
<comment type="function">
    <text evidence="1">One of the primary rRNA binding proteins. Required for association of the 30S and 50S subunits to form the 70S ribosome, for tRNA binding and peptide bond formation. It has been suggested to have peptidyltransferase activity; this is somewhat controversial. Makes several contacts with the 16S rRNA in the 70S ribosome.</text>
</comment>
<comment type="subunit">
    <text evidence="1">Part of the 50S ribosomal subunit. Forms a bridge to the 30S subunit in the 70S ribosome.</text>
</comment>
<comment type="similarity">
    <text evidence="1">Belongs to the universal ribosomal protein uL2 family.</text>
</comment>
<proteinExistence type="inferred from homology"/>
<sequence length="273" mass="29860">MAVVKCKPTSPGRRHVVKVVNPELHKGKPFAPLLEKNSKSGGRNNNGRITTRHIGGGHKQAYRIVDFKRNKDGIPAVVERLEYDPNRSANIALVLYKDGERRYILAPKGLKAGDQIQSGVDAAIKPGNTLPMRNIPVGSTVHNVEMKPGKGGQLARSAGTYVQIVARDGAYVTLRLRSGEMRKVEADCRATLGEVGNAEHMLRVLGKAGAARWRGVRPTVRGTAMNPVDHPHGGGEGRNFGKHPVTPWGVQTKGKKTRSNKRTDKFIVRRRSK</sequence>
<evidence type="ECO:0000255" key="1">
    <source>
        <dbReference type="HAMAP-Rule" id="MF_01320"/>
    </source>
</evidence>
<evidence type="ECO:0000256" key="2">
    <source>
        <dbReference type="SAM" id="MobiDB-lite"/>
    </source>
</evidence>
<evidence type="ECO:0000305" key="3"/>
<organism>
    <name type="scientific">Escherichia coli (strain SE11)</name>
    <dbReference type="NCBI Taxonomy" id="409438"/>
    <lineage>
        <taxon>Bacteria</taxon>
        <taxon>Pseudomonadati</taxon>
        <taxon>Pseudomonadota</taxon>
        <taxon>Gammaproteobacteria</taxon>
        <taxon>Enterobacterales</taxon>
        <taxon>Enterobacteriaceae</taxon>
        <taxon>Escherichia</taxon>
    </lineage>
</organism>
<gene>
    <name evidence="1" type="primary">rplB</name>
    <name type="ordered locus">ECSE_3592</name>
</gene>
<feature type="chain" id="PRO_1000141549" description="Large ribosomal subunit protein uL2">
    <location>
        <begin position="1"/>
        <end position="273"/>
    </location>
</feature>
<feature type="region of interest" description="Disordered" evidence="2">
    <location>
        <begin position="28"/>
        <end position="53"/>
    </location>
</feature>
<feature type="region of interest" description="Disordered" evidence="2">
    <location>
        <begin position="221"/>
        <end position="273"/>
    </location>
</feature>
<feature type="compositionally biased region" description="Low complexity" evidence="2">
    <location>
        <begin position="39"/>
        <end position="48"/>
    </location>
</feature>
<feature type="modified residue" description="N6-acetyllysine" evidence="1">
    <location>
        <position position="242"/>
    </location>
</feature>
<reference key="1">
    <citation type="journal article" date="2008" name="DNA Res.">
        <title>Complete genome sequence and comparative analysis of the wild-type commensal Escherichia coli strain SE11 isolated from a healthy adult.</title>
        <authorList>
            <person name="Oshima K."/>
            <person name="Toh H."/>
            <person name="Ogura Y."/>
            <person name="Sasamoto H."/>
            <person name="Morita H."/>
            <person name="Park S.-H."/>
            <person name="Ooka T."/>
            <person name="Iyoda S."/>
            <person name="Taylor T.D."/>
            <person name="Hayashi T."/>
            <person name="Itoh K."/>
            <person name="Hattori M."/>
        </authorList>
    </citation>
    <scope>NUCLEOTIDE SEQUENCE [LARGE SCALE GENOMIC DNA]</scope>
    <source>
        <strain>SE11</strain>
    </source>
</reference>
<accession>B6I231</accession>